<comment type="catalytic activity">
    <reaction evidence="1">
        <text>shikimate + ATP = 3-phosphoshikimate + ADP + H(+)</text>
        <dbReference type="Rhea" id="RHEA:13121"/>
        <dbReference type="ChEBI" id="CHEBI:15378"/>
        <dbReference type="ChEBI" id="CHEBI:30616"/>
        <dbReference type="ChEBI" id="CHEBI:36208"/>
        <dbReference type="ChEBI" id="CHEBI:145989"/>
        <dbReference type="ChEBI" id="CHEBI:456216"/>
        <dbReference type="EC" id="2.7.1.71"/>
    </reaction>
</comment>
<comment type="pathway">
    <text evidence="1">Metabolic intermediate biosynthesis; chorismate biosynthesis; chorismate from D-erythrose 4-phosphate and phosphoenolpyruvate: step 5/7.</text>
</comment>
<comment type="subcellular location">
    <subcellularLocation>
        <location evidence="1">Cytoplasm</location>
    </subcellularLocation>
</comment>
<comment type="similarity">
    <text evidence="1">Belongs to the GHMP kinase family. Archaeal shikimate kinase subfamily.</text>
</comment>
<reference key="1">
    <citation type="submission" date="2007-06" db="EMBL/GenBank/DDBJ databases">
        <title>Complete sequence of Methanococcus vannielii SB.</title>
        <authorList>
            <consortium name="US DOE Joint Genome Institute"/>
            <person name="Copeland A."/>
            <person name="Lucas S."/>
            <person name="Lapidus A."/>
            <person name="Barry K."/>
            <person name="Glavina del Rio T."/>
            <person name="Dalin E."/>
            <person name="Tice H."/>
            <person name="Pitluck S."/>
            <person name="Chain P."/>
            <person name="Malfatti S."/>
            <person name="Shin M."/>
            <person name="Vergez L."/>
            <person name="Schmutz J."/>
            <person name="Larimer F."/>
            <person name="Land M."/>
            <person name="Hauser L."/>
            <person name="Kyrpides N."/>
            <person name="Anderson I."/>
            <person name="Sieprawska-Lupa M."/>
            <person name="Whitman W.B."/>
            <person name="Richardson P."/>
        </authorList>
    </citation>
    <scope>NUCLEOTIDE SEQUENCE [LARGE SCALE GENOMIC DNA]</scope>
    <source>
        <strain>ATCC 35089 / DSM 1224 / JCM 13029 / OCM 148 / SB</strain>
    </source>
</reference>
<gene>
    <name evidence="1" type="primary">aroK</name>
    <name type="ordered locus">Mevan_1331</name>
</gene>
<accession>A6URV6</accession>
<proteinExistence type="inferred from homology"/>
<protein>
    <recommendedName>
        <fullName evidence="1">Shikimate kinase</fullName>
        <shortName evidence="1">SK</shortName>
        <ecNumber evidence="1">2.7.1.71</ecNumber>
    </recommendedName>
</protein>
<evidence type="ECO:0000255" key="1">
    <source>
        <dbReference type="HAMAP-Rule" id="MF_00370"/>
    </source>
</evidence>
<sequence>MRCSAISPGSGTIINAISTGKGSAFGIDLKIKANVELKNDGKSKINGILLDNPSLKPNLVERCVKNVLEHFEVDYSAKISTSSELPLKSGLSSSSAASNAAVLATFGALGEKIDSELILDLAIKSSFEEQLTITGAYDDATASYFGGITVCNNLERKILKKDVFKEELDVIILMPNFKKNLNVKRMKLISDYVELAFEKCMNADYYKALFLNGILYSSALNFPSYISVDALEAGAVTAGLSGTGPSYIALSYQENTEKVKNAFKKYGTVIISKPDNFGSKIIY</sequence>
<name>AROK_METVS</name>
<feature type="chain" id="PRO_1000059939" description="Shikimate kinase">
    <location>
        <begin position="1"/>
        <end position="283"/>
    </location>
</feature>
<feature type="binding site" evidence="1">
    <location>
        <begin position="86"/>
        <end position="96"/>
    </location>
    <ligand>
        <name>ATP</name>
        <dbReference type="ChEBI" id="CHEBI:30616"/>
    </ligand>
</feature>
<organism>
    <name type="scientific">Methanococcus vannielii (strain ATCC 35089 / DSM 1224 / JCM 13029 / OCM 148 / SB)</name>
    <dbReference type="NCBI Taxonomy" id="406327"/>
    <lineage>
        <taxon>Archaea</taxon>
        <taxon>Methanobacteriati</taxon>
        <taxon>Methanobacteriota</taxon>
        <taxon>Methanomada group</taxon>
        <taxon>Methanococci</taxon>
        <taxon>Methanococcales</taxon>
        <taxon>Methanococcaceae</taxon>
        <taxon>Methanococcus</taxon>
    </lineage>
</organism>
<dbReference type="EC" id="2.7.1.71" evidence="1"/>
<dbReference type="EMBL" id="CP000742">
    <property type="protein sequence ID" value="ABR55228.1"/>
    <property type="molecule type" value="Genomic_DNA"/>
</dbReference>
<dbReference type="RefSeq" id="WP_012066143.1">
    <property type="nucleotide sequence ID" value="NC_009634.1"/>
</dbReference>
<dbReference type="SMR" id="A6URV6"/>
<dbReference type="STRING" id="406327.Mevan_1331"/>
<dbReference type="GeneID" id="5325165"/>
<dbReference type="KEGG" id="mvn:Mevan_1331"/>
<dbReference type="eggNOG" id="arCOG01025">
    <property type="taxonomic scope" value="Archaea"/>
</dbReference>
<dbReference type="HOGENOM" id="CLU_073768_0_0_2"/>
<dbReference type="OrthoDB" id="9602at2157"/>
<dbReference type="UniPathway" id="UPA00053">
    <property type="reaction ID" value="UER00088"/>
</dbReference>
<dbReference type="Proteomes" id="UP000001107">
    <property type="component" value="Chromosome"/>
</dbReference>
<dbReference type="GO" id="GO:0005737">
    <property type="term" value="C:cytoplasm"/>
    <property type="evidence" value="ECO:0007669"/>
    <property type="project" value="UniProtKB-SubCell"/>
</dbReference>
<dbReference type="GO" id="GO:0005524">
    <property type="term" value="F:ATP binding"/>
    <property type="evidence" value="ECO:0007669"/>
    <property type="project" value="UniProtKB-UniRule"/>
</dbReference>
<dbReference type="GO" id="GO:0004765">
    <property type="term" value="F:shikimate kinase activity"/>
    <property type="evidence" value="ECO:0007669"/>
    <property type="project" value="UniProtKB-UniRule"/>
</dbReference>
<dbReference type="GO" id="GO:0008652">
    <property type="term" value="P:amino acid biosynthetic process"/>
    <property type="evidence" value="ECO:0007669"/>
    <property type="project" value="UniProtKB-KW"/>
</dbReference>
<dbReference type="GO" id="GO:0009073">
    <property type="term" value="P:aromatic amino acid family biosynthetic process"/>
    <property type="evidence" value="ECO:0007669"/>
    <property type="project" value="UniProtKB-KW"/>
</dbReference>
<dbReference type="GO" id="GO:0009423">
    <property type="term" value="P:chorismate biosynthetic process"/>
    <property type="evidence" value="ECO:0007669"/>
    <property type="project" value="UniProtKB-UniRule"/>
</dbReference>
<dbReference type="Gene3D" id="3.30.230.10">
    <property type="match status" value="1"/>
</dbReference>
<dbReference type="Gene3D" id="3.30.70.890">
    <property type="entry name" value="GHMP kinase, C-terminal domain"/>
    <property type="match status" value="1"/>
</dbReference>
<dbReference type="HAMAP" id="MF_00370">
    <property type="entry name" value="Shik_kinase_arch"/>
    <property type="match status" value="1"/>
</dbReference>
<dbReference type="InterPro" id="IPR036554">
    <property type="entry name" value="GHMP_kinase_C_sf"/>
</dbReference>
<dbReference type="InterPro" id="IPR006204">
    <property type="entry name" value="GHMP_kinase_N_dom"/>
</dbReference>
<dbReference type="InterPro" id="IPR020568">
    <property type="entry name" value="Ribosomal_Su5_D2-typ_SF"/>
</dbReference>
<dbReference type="InterPro" id="IPR014721">
    <property type="entry name" value="Ribsml_uS5_D2-typ_fold_subgr"/>
</dbReference>
<dbReference type="InterPro" id="IPR010189">
    <property type="entry name" value="SK_arc"/>
</dbReference>
<dbReference type="NCBIfam" id="TIGR01920">
    <property type="entry name" value="Shik_kin_archae"/>
    <property type="match status" value="1"/>
</dbReference>
<dbReference type="PANTHER" id="PTHR20861">
    <property type="entry name" value="HOMOSERINE/4-DIPHOSPHOCYTIDYL-2-C-METHYL-D-ERYTHRITOL KINASE"/>
    <property type="match status" value="1"/>
</dbReference>
<dbReference type="PANTHER" id="PTHR20861:SF3">
    <property type="entry name" value="SHIKIMATE KINASE"/>
    <property type="match status" value="1"/>
</dbReference>
<dbReference type="Pfam" id="PF00288">
    <property type="entry name" value="GHMP_kinases_N"/>
    <property type="match status" value="1"/>
</dbReference>
<dbReference type="PIRSF" id="PIRSF005758">
    <property type="entry name" value="Shikimt_kin_arch"/>
    <property type="match status" value="1"/>
</dbReference>
<dbReference type="SUPFAM" id="SSF55060">
    <property type="entry name" value="GHMP Kinase, C-terminal domain"/>
    <property type="match status" value="1"/>
</dbReference>
<dbReference type="SUPFAM" id="SSF54211">
    <property type="entry name" value="Ribosomal protein S5 domain 2-like"/>
    <property type="match status" value="1"/>
</dbReference>
<keyword id="KW-0028">Amino-acid biosynthesis</keyword>
<keyword id="KW-0057">Aromatic amino acid biosynthesis</keyword>
<keyword id="KW-0067">ATP-binding</keyword>
<keyword id="KW-0963">Cytoplasm</keyword>
<keyword id="KW-0418">Kinase</keyword>
<keyword id="KW-0547">Nucleotide-binding</keyword>
<keyword id="KW-0808">Transferase</keyword>